<sequence length="296" mass="33090">MYQRLLKSLNHLNPRAWDFVQLTRMDKPIGIYLLLWPTLWALWIAGKGSPSLINIVIFVLGVVLTRAGGCVINDWADRKVDGHVKRTEQRPLVSGKISSKEALVFFAVLMGISFLLVLLTNATTILLSLGGLALAASYPFMKRYTYYPQVVLGAAFSWGMPMAFTAETGDLPATAWLLYIANLLWTVGYDTYYAMTDRDDDLKIGVKSTAILFGDADRVIILTLQGLSLVCLLLAGARFELGGWFHLGLLAAAGCFAWEFWYTRDKDRMKCFKAFLHNHWAGLAIFVGIVADYAFR</sequence>
<comment type="function">
    <text evidence="1">Catalyzes the prenylation of para-hydroxybenzoate (PHB) with an all-trans polyprenyl group. Mediates the second step in the final reaction sequence of ubiquinone-8 (UQ-8) biosynthesis, which is the condensation of the polyisoprenoid side chain with PHB, generating the first membrane-bound Q intermediate 3-octaprenyl-4-hydroxybenzoate.</text>
</comment>
<comment type="catalytic activity">
    <reaction evidence="1">
        <text>all-trans-octaprenyl diphosphate + 4-hydroxybenzoate = 4-hydroxy-3-(all-trans-octaprenyl)benzoate + diphosphate</text>
        <dbReference type="Rhea" id="RHEA:27782"/>
        <dbReference type="ChEBI" id="CHEBI:1617"/>
        <dbReference type="ChEBI" id="CHEBI:17879"/>
        <dbReference type="ChEBI" id="CHEBI:33019"/>
        <dbReference type="ChEBI" id="CHEBI:57711"/>
        <dbReference type="EC" id="2.5.1.39"/>
    </reaction>
</comment>
<comment type="cofactor">
    <cofactor evidence="1">
        <name>Mg(2+)</name>
        <dbReference type="ChEBI" id="CHEBI:18420"/>
    </cofactor>
</comment>
<comment type="pathway">
    <text evidence="1">Cofactor biosynthesis; ubiquinone biosynthesis.</text>
</comment>
<comment type="subcellular location">
    <subcellularLocation>
        <location evidence="1">Cell inner membrane</location>
        <topology evidence="1">Multi-pass membrane protein</topology>
    </subcellularLocation>
</comment>
<comment type="similarity">
    <text evidence="1">Belongs to the UbiA prenyltransferase family.</text>
</comment>
<proteinExistence type="inferred from homology"/>
<feature type="chain" id="PRO_1000215805" description="4-hydroxybenzoate octaprenyltransferase">
    <location>
        <begin position="1"/>
        <end position="296"/>
    </location>
</feature>
<feature type="transmembrane region" description="Helical" evidence="1">
    <location>
        <begin position="28"/>
        <end position="48"/>
    </location>
</feature>
<feature type="transmembrane region" description="Helical" evidence="1">
    <location>
        <begin position="52"/>
        <end position="72"/>
    </location>
</feature>
<feature type="transmembrane region" description="Helical" evidence="1">
    <location>
        <begin position="102"/>
        <end position="122"/>
    </location>
</feature>
<feature type="transmembrane region" description="Helical" evidence="1">
    <location>
        <begin position="146"/>
        <end position="166"/>
    </location>
</feature>
<feature type="transmembrane region" description="Helical" evidence="1">
    <location>
        <begin position="169"/>
        <end position="189"/>
    </location>
</feature>
<feature type="transmembrane region" description="Helical" evidence="1">
    <location>
        <begin position="219"/>
        <end position="239"/>
    </location>
</feature>
<feature type="transmembrane region" description="Helical" evidence="1">
    <location>
        <begin position="241"/>
        <end position="261"/>
    </location>
</feature>
<feature type="transmembrane region" description="Helical" evidence="1">
    <location>
        <begin position="275"/>
        <end position="295"/>
    </location>
</feature>
<dbReference type="EC" id="2.5.1.39" evidence="1"/>
<dbReference type="EMBL" id="AM181176">
    <property type="protein sequence ID" value="CAY53593.1"/>
    <property type="molecule type" value="Genomic_DNA"/>
</dbReference>
<dbReference type="RefSeq" id="WP_015886571.1">
    <property type="nucleotide sequence ID" value="NC_012660.1"/>
</dbReference>
<dbReference type="SMR" id="C3K4C4"/>
<dbReference type="STRING" id="294.SRM1_05752"/>
<dbReference type="eggNOG" id="COG0382">
    <property type="taxonomic scope" value="Bacteria"/>
</dbReference>
<dbReference type="HOGENOM" id="CLU_034879_1_0_6"/>
<dbReference type="OrthoDB" id="9782418at2"/>
<dbReference type="UniPathway" id="UPA00232"/>
<dbReference type="GO" id="GO:0005886">
    <property type="term" value="C:plasma membrane"/>
    <property type="evidence" value="ECO:0007669"/>
    <property type="project" value="UniProtKB-SubCell"/>
</dbReference>
<dbReference type="GO" id="GO:0008412">
    <property type="term" value="F:4-hydroxybenzoate polyprenyltransferase activity"/>
    <property type="evidence" value="ECO:0007669"/>
    <property type="project" value="UniProtKB-UniRule"/>
</dbReference>
<dbReference type="GO" id="GO:0006744">
    <property type="term" value="P:ubiquinone biosynthetic process"/>
    <property type="evidence" value="ECO:0007669"/>
    <property type="project" value="UniProtKB-UniRule"/>
</dbReference>
<dbReference type="CDD" id="cd13959">
    <property type="entry name" value="PT_UbiA_COQ2"/>
    <property type="match status" value="1"/>
</dbReference>
<dbReference type="FunFam" id="1.10.357.140:FF:000002">
    <property type="entry name" value="4-hydroxybenzoate octaprenyltransferase"/>
    <property type="match status" value="1"/>
</dbReference>
<dbReference type="FunFam" id="1.20.120.1780:FF:000001">
    <property type="entry name" value="4-hydroxybenzoate octaprenyltransferase"/>
    <property type="match status" value="1"/>
</dbReference>
<dbReference type="Gene3D" id="1.10.357.140">
    <property type="entry name" value="UbiA prenyltransferase"/>
    <property type="match status" value="1"/>
</dbReference>
<dbReference type="Gene3D" id="1.20.120.1780">
    <property type="entry name" value="UbiA prenyltransferase"/>
    <property type="match status" value="1"/>
</dbReference>
<dbReference type="HAMAP" id="MF_01635">
    <property type="entry name" value="UbiA"/>
    <property type="match status" value="1"/>
</dbReference>
<dbReference type="InterPro" id="IPR006370">
    <property type="entry name" value="HB_polyprenyltransferase-like"/>
</dbReference>
<dbReference type="InterPro" id="IPR039653">
    <property type="entry name" value="Prenyltransferase"/>
</dbReference>
<dbReference type="InterPro" id="IPR000537">
    <property type="entry name" value="UbiA_prenyltransferase"/>
</dbReference>
<dbReference type="InterPro" id="IPR044878">
    <property type="entry name" value="UbiA_sf"/>
</dbReference>
<dbReference type="NCBIfam" id="TIGR01474">
    <property type="entry name" value="ubiA_proteo"/>
    <property type="match status" value="1"/>
</dbReference>
<dbReference type="PANTHER" id="PTHR11048:SF28">
    <property type="entry name" value="4-HYDROXYBENZOATE POLYPRENYLTRANSFERASE, MITOCHONDRIAL"/>
    <property type="match status" value="1"/>
</dbReference>
<dbReference type="PANTHER" id="PTHR11048">
    <property type="entry name" value="PRENYLTRANSFERASES"/>
    <property type="match status" value="1"/>
</dbReference>
<dbReference type="Pfam" id="PF01040">
    <property type="entry name" value="UbiA"/>
    <property type="match status" value="1"/>
</dbReference>
<organism>
    <name type="scientific">Pseudomonas fluorescens (strain SBW25)</name>
    <dbReference type="NCBI Taxonomy" id="216595"/>
    <lineage>
        <taxon>Bacteria</taxon>
        <taxon>Pseudomonadati</taxon>
        <taxon>Pseudomonadota</taxon>
        <taxon>Gammaproteobacteria</taxon>
        <taxon>Pseudomonadales</taxon>
        <taxon>Pseudomonadaceae</taxon>
        <taxon>Pseudomonas</taxon>
    </lineage>
</organism>
<evidence type="ECO:0000255" key="1">
    <source>
        <dbReference type="HAMAP-Rule" id="MF_01635"/>
    </source>
</evidence>
<gene>
    <name evidence="1" type="primary">ubiA</name>
    <name type="ordered locus">PFLU_6036</name>
</gene>
<accession>C3K4C4</accession>
<keyword id="KW-0997">Cell inner membrane</keyword>
<keyword id="KW-1003">Cell membrane</keyword>
<keyword id="KW-0460">Magnesium</keyword>
<keyword id="KW-0472">Membrane</keyword>
<keyword id="KW-0808">Transferase</keyword>
<keyword id="KW-0812">Transmembrane</keyword>
<keyword id="KW-1133">Transmembrane helix</keyword>
<keyword id="KW-0831">Ubiquinone biosynthesis</keyword>
<protein>
    <recommendedName>
        <fullName evidence="1">4-hydroxybenzoate octaprenyltransferase</fullName>
        <ecNumber evidence="1">2.5.1.39</ecNumber>
    </recommendedName>
    <alternativeName>
        <fullName evidence="1">4-HB polyprenyltransferase</fullName>
    </alternativeName>
</protein>
<name>UBIA_PSEFS</name>
<reference key="1">
    <citation type="journal article" date="2009" name="Genome Biol.">
        <title>Genomic and genetic analyses of diversity and plant interactions of Pseudomonas fluorescens.</title>
        <authorList>
            <person name="Silby M.W."/>
            <person name="Cerdeno-Tarraga A.M."/>
            <person name="Vernikos G.S."/>
            <person name="Giddens S.R."/>
            <person name="Jackson R.W."/>
            <person name="Preston G.M."/>
            <person name="Zhang X.-X."/>
            <person name="Moon C.D."/>
            <person name="Gehrig S.M."/>
            <person name="Godfrey S.A.C."/>
            <person name="Knight C.G."/>
            <person name="Malone J.G."/>
            <person name="Robinson Z."/>
            <person name="Spiers A.J."/>
            <person name="Harris S."/>
            <person name="Challis G.L."/>
            <person name="Yaxley A.M."/>
            <person name="Harris D."/>
            <person name="Seeger K."/>
            <person name="Murphy L."/>
            <person name="Rutter S."/>
            <person name="Squares R."/>
            <person name="Quail M.A."/>
            <person name="Saunders E."/>
            <person name="Mavromatis K."/>
            <person name="Brettin T.S."/>
            <person name="Bentley S.D."/>
            <person name="Hothersall J."/>
            <person name="Stephens E."/>
            <person name="Thomas C.M."/>
            <person name="Parkhill J."/>
            <person name="Levy S.B."/>
            <person name="Rainey P.B."/>
            <person name="Thomson N.R."/>
        </authorList>
    </citation>
    <scope>NUCLEOTIDE SEQUENCE [LARGE SCALE GENOMIC DNA]</scope>
    <source>
        <strain>SBW25</strain>
    </source>
</reference>